<organism>
    <name type="scientific">Burkholderia pseudomallei (strain K96243)</name>
    <dbReference type="NCBI Taxonomy" id="272560"/>
    <lineage>
        <taxon>Bacteria</taxon>
        <taxon>Pseudomonadati</taxon>
        <taxon>Pseudomonadota</taxon>
        <taxon>Betaproteobacteria</taxon>
        <taxon>Burkholderiales</taxon>
        <taxon>Burkholderiaceae</taxon>
        <taxon>Burkholderia</taxon>
        <taxon>pseudomallei group</taxon>
    </lineage>
</organism>
<proteinExistence type="inferred from homology"/>
<keyword id="KW-0066">ATP synthesis</keyword>
<keyword id="KW-0067">ATP-binding</keyword>
<keyword id="KW-0997">Cell inner membrane</keyword>
<keyword id="KW-1003">Cell membrane</keyword>
<keyword id="KW-0139">CF(1)</keyword>
<keyword id="KW-0375">Hydrogen ion transport</keyword>
<keyword id="KW-0406">Ion transport</keyword>
<keyword id="KW-0472">Membrane</keyword>
<keyword id="KW-0547">Nucleotide-binding</keyword>
<keyword id="KW-1185">Reference proteome</keyword>
<keyword id="KW-1278">Translocase</keyword>
<keyword id="KW-0813">Transport</keyword>
<accession>Q63IX0</accession>
<gene>
    <name evidence="1" type="primary">atpA2</name>
    <name type="ordered locus">BPSS1946</name>
</gene>
<protein>
    <recommendedName>
        <fullName evidence="1">ATP synthase subunit alpha 2</fullName>
        <ecNumber evidence="1">7.1.2.2</ecNumber>
    </recommendedName>
    <alternativeName>
        <fullName evidence="1">ATP synthase F1 sector subunit alpha 2</fullName>
    </alternativeName>
    <alternativeName>
        <fullName evidence="1">F-ATPase subunit alpha 2</fullName>
    </alternativeName>
</protein>
<sequence>MTPTPDAPAAAAADAATGAGWLARRRGALARVALAPVAQAIGRVERVADGIAFVSGLEDTMLNEVLRFEGGVTGFAHTLDEDLISVVLLDPDAGVRAQTAVARTGAVLEVPAGPQLLGRVVDPLGRPLDGGAPLDAAHTLPIERAAPAIIERDLVSEPLDTGVLIVDALFTIGRGQRELIIGDRATGKTSLAIDAIVNQRHSDVICVYVAIGQRASAVRRVIDAVRRYGAPERCVFVVAPAACAPGLQWIAPFAGFSIAEYFRDRGQHALVVVDDLTKHAATHRELALLTREPPGREAYPGDIFYVHARLLERAAKLSAALGGGSLSALPIAETDAGNLAAYIPTNLISITDGQIVLDSALFAANQRPAVDVGLSVSRVGGKAQHPALRAASGRLRLDYAQFLELEAFTRFGGLTDARLRAQITRGERIRALITQPRFRALRTLDEVVLLKALAAGALDAMSPDLVAPLRERLPAWLDARIAALTPALAPPRDWLADDAALDALAESVGELIERIAADAARRATAGMPAEDAAGDIGGAFGGEQARGDADRDADHGANREVSREVSPEASREVSREVSCEVSHEADRDAAADAARVAGRAPGRAEPDRAAPRAMPDGPPRAQADGDRASASRPRPDARGDAARTAPSPQGGADANVDAEAEARHKR</sequence>
<evidence type="ECO:0000255" key="1">
    <source>
        <dbReference type="HAMAP-Rule" id="MF_01346"/>
    </source>
</evidence>
<evidence type="ECO:0000256" key="2">
    <source>
        <dbReference type="SAM" id="MobiDB-lite"/>
    </source>
</evidence>
<feature type="chain" id="PRO_0000238220" description="ATP synthase subunit alpha 2">
    <location>
        <begin position="1"/>
        <end position="666"/>
    </location>
</feature>
<feature type="region of interest" description="Disordered" evidence="2">
    <location>
        <begin position="527"/>
        <end position="666"/>
    </location>
</feature>
<feature type="compositionally biased region" description="Basic and acidic residues" evidence="2">
    <location>
        <begin position="545"/>
        <end position="590"/>
    </location>
</feature>
<feature type="compositionally biased region" description="Low complexity" evidence="2">
    <location>
        <begin position="591"/>
        <end position="601"/>
    </location>
</feature>
<feature type="compositionally biased region" description="Basic and acidic residues" evidence="2">
    <location>
        <begin position="623"/>
        <end position="641"/>
    </location>
</feature>
<feature type="binding site" evidence="1">
    <location>
        <begin position="182"/>
        <end position="189"/>
    </location>
    <ligand>
        <name>ATP</name>
        <dbReference type="ChEBI" id="CHEBI:30616"/>
    </ligand>
</feature>
<feature type="site" description="Required for activity" evidence="1">
    <location>
        <position position="375"/>
    </location>
</feature>
<comment type="function">
    <text evidence="1">Produces ATP from ADP in the presence of a proton gradient across the membrane. The alpha chain is a regulatory subunit.</text>
</comment>
<comment type="catalytic activity">
    <reaction evidence="1">
        <text>ATP + H2O + 4 H(+)(in) = ADP + phosphate + 5 H(+)(out)</text>
        <dbReference type="Rhea" id="RHEA:57720"/>
        <dbReference type="ChEBI" id="CHEBI:15377"/>
        <dbReference type="ChEBI" id="CHEBI:15378"/>
        <dbReference type="ChEBI" id="CHEBI:30616"/>
        <dbReference type="ChEBI" id="CHEBI:43474"/>
        <dbReference type="ChEBI" id="CHEBI:456216"/>
        <dbReference type="EC" id="7.1.2.2"/>
    </reaction>
</comment>
<comment type="subunit">
    <text evidence="1">F-type ATPases have 2 components, CF(1) - the catalytic core - and CF(0) - the membrane proton channel. CF(1) has five subunits: alpha(3), beta(3), gamma(1), delta(1), epsilon(1). CF(0) has three main subunits: a(1), b(2) and c(9-12). The alpha and beta chains form an alternating ring which encloses part of the gamma chain. CF(1) is attached to CF(0) by a central stalk formed by the gamma and epsilon chains, while a peripheral stalk is formed by the delta and b chains.</text>
</comment>
<comment type="subcellular location">
    <subcellularLocation>
        <location evidence="1">Cell inner membrane</location>
        <topology evidence="1">Peripheral membrane protein</topology>
    </subcellularLocation>
</comment>
<comment type="similarity">
    <text evidence="1">Belongs to the ATPase alpha/beta chains family.</text>
</comment>
<reference key="1">
    <citation type="journal article" date="2004" name="Proc. Natl. Acad. Sci. U.S.A.">
        <title>Genomic plasticity of the causative agent of melioidosis, Burkholderia pseudomallei.</title>
        <authorList>
            <person name="Holden M.T.G."/>
            <person name="Titball R.W."/>
            <person name="Peacock S.J."/>
            <person name="Cerdeno-Tarraga A.-M."/>
            <person name="Atkins T."/>
            <person name="Crossman L.C."/>
            <person name="Pitt T."/>
            <person name="Churcher C."/>
            <person name="Mungall K.L."/>
            <person name="Bentley S.D."/>
            <person name="Sebaihia M."/>
            <person name="Thomson N.R."/>
            <person name="Bason N."/>
            <person name="Beacham I.R."/>
            <person name="Brooks K."/>
            <person name="Brown K.A."/>
            <person name="Brown N.F."/>
            <person name="Challis G.L."/>
            <person name="Cherevach I."/>
            <person name="Chillingworth T."/>
            <person name="Cronin A."/>
            <person name="Crossett B."/>
            <person name="Davis P."/>
            <person name="DeShazer D."/>
            <person name="Feltwell T."/>
            <person name="Fraser A."/>
            <person name="Hance Z."/>
            <person name="Hauser H."/>
            <person name="Holroyd S."/>
            <person name="Jagels K."/>
            <person name="Keith K.E."/>
            <person name="Maddison M."/>
            <person name="Moule S."/>
            <person name="Price C."/>
            <person name="Quail M.A."/>
            <person name="Rabbinowitsch E."/>
            <person name="Rutherford K."/>
            <person name="Sanders M."/>
            <person name="Simmonds M."/>
            <person name="Songsivilai S."/>
            <person name="Stevens K."/>
            <person name="Tumapa S."/>
            <person name="Vesaratchavest M."/>
            <person name="Whitehead S."/>
            <person name="Yeats C."/>
            <person name="Barrell B.G."/>
            <person name="Oyston P.C.F."/>
            <person name="Parkhill J."/>
        </authorList>
    </citation>
    <scope>NUCLEOTIDE SEQUENCE [LARGE SCALE GENOMIC DNA]</scope>
    <source>
        <strain>K96243</strain>
    </source>
</reference>
<name>ATPA2_BURPS</name>
<dbReference type="EC" id="7.1.2.2" evidence="1"/>
<dbReference type="EMBL" id="BX571966">
    <property type="protein sequence ID" value="CAH39424.1"/>
    <property type="molecule type" value="Genomic_DNA"/>
</dbReference>
<dbReference type="RefSeq" id="WP_011205710.1">
    <property type="nucleotide sequence ID" value="NZ_CP009537.1"/>
</dbReference>
<dbReference type="RefSeq" id="YP_111952.1">
    <property type="nucleotide sequence ID" value="NC_006351.1"/>
</dbReference>
<dbReference type="SMR" id="Q63IX0"/>
<dbReference type="STRING" id="272560.BPSS1946"/>
<dbReference type="KEGG" id="bps:BPSS1946"/>
<dbReference type="PATRIC" id="fig|272560.51.peg.5436"/>
<dbReference type="eggNOG" id="COG0056">
    <property type="taxonomic scope" value="Bacteria"/>
</dbReference>
<dbReference type="Proteomes" id="UP000000605">
    <property type="component" value="Chromosome 2"/>
</dbReference>
<dbReference type="GO" id="GO:0005886">
    <property type="term" value="C:plasma membrane"/>
    <property type="evidence" value="ECO:0007669"/>
    <property type="project" value="UniProtKB-SubCell"/>
</dbReference>
<dbReference type="GO" id="GO:0045259">
    <property type="term" value="C:proton-transporting ATP synthase complex"/>
    <property type="evidence" value="ECO:0007669"/>
    <property type="project" value="UniProtKB-KW"/>
</dbReference>
<dbReference type="GO" id="GO:0043531">
    <property type="term" value="F:ADP binding"/>
    <property type="evidence" value="ECO:0007669"/>
    <property type="project" value="TreeGrafter"/>
</dbReference>
<dbReference type="GO" id="GO:0005524">
    <property type="term" value="F:ATP binding"/>
    <property type="evidence" value="ECO:0007669"/>
    <property type="project" value="UniProtKB-UniRule"/>
</dbReference>
<dbReference type="GO" id="GO:0046933">
    <property type="term" value="F:proton-transporting ATP synthase activity, rotational mechanism"/>
    <property type="evidence" value="ECO:0007669"/>
    <property type="project" value="UniProtKB-UniRule"/>
</dbReference>
<dbReference type="CDD" id="cd18116">
    <property type="entry name" value="ATP-synt_F1_alpha_N"/>
    <property type="match status" value="1"/>
</dbReference>
<dbReference type="CDD" id="cd01132">
    <property type="entry name" value="F1-ATPase_alpha_CD"/>
    <property type="match status" value="1"/>
</dbReference>
<dbReference type="FunFam" id="3.40.50.300:FF:004039">
    <property type="entry name" value="ATP synthase subunit alpha, mitochondrial"/>
    <property type="match status" value="1"/>
</dbReference>
<dbReference type="Gene3D" id="2.40.30.20">
    <property type="match status" value="1"/>
</dbReference>
<dbReference type="Gene3D" id="1.20.150.20">
    <property type="entry name" value="ATP synthase alpha/beta chain, C-terminal domain"/>
    <property type="match status" value="1"/>
</dbReference>
<dbReference type="Gene3D" id="3.40.50.300">
    <property type="entry name" value="P-loop containing nucleotide triphosphate hydrolases"/>
    <property type="match status" value="1"/>
</dbReference>
<dbReference type="HAMAP" id="MF_01346">
    <property type="entry name" value="ATP_synth_alpha_bact"/>
    <property type="match status" value="1"/>
</dbReference>
<dbReference type="InterPro" id="IPR023366">
    <property type="entry name" value="ATP_synth_asu-like_sf"/>
</dbReference>
<dbReference type="InterPro" id="IPR000793">
    <property type="entry name" value="ATP_synth_asu_C"/>
</dbReference>
<dbReference type="InterPro" id="IPR038376">
    <property type="entry name" value="ATP_synth_asu_C_sf"/>
</dbReference>
<dbReference type="InterPro" id="IPR033732">
    <property type="entry name" value="ATP_synth_F1_a_nt-bd_dom"/>
</dbReference>
<dbReference type="InterPro" id="IPR005294">
    <property type="entry name" value="ATP_synth_F1_asu"/>
</dbReference>
<dbReference type="InterPro" id="IPR020003">
    <property type="entry name" value="ATPase_a/bsu_AS"/>
</dbReference>
<dbReference type="InterPro" id="IPR004100">
    <property type="entry name" value="ATPase_F1/V1/A1_a/bsu_N"/>
</dbReference>
<dbReference type="InterPro" id="IPR036121">
    <property type="entry name" value="ATPase_F1/V1/A1_a/bsu_N_sf"/>
</dbReference>
<dbReference type="InterPro" id="IPR000194">
    <property type="entry name" value="ATPase_F1/V1/A1_a/bsu_nucl-bd"/>
</dbReference>
<dbReference type="InterPro" id="IPR027417">
    <property type="entry name" value="P-loop_NTPase"/>
</dbReference>
<dbReference type="NCBIfam" id="TIGR00962">
    <property type="entry name" value="atpA"/>
    <property type="match status" value="1"/>
</dbReference>
<dbReference type="NCBIfam" id="NF009884">
    <property type="entry name" value="PRK13343.1"/>
    <property type="match status" value="1"/>
</dbReference>
<dbReference type="PANTHER" id="PTHR48082">
    <property type="entry name" value="ATP SYNTHASE SUBUNIT ALPHA, MITOCHONDRIAL"/>
    <property type="match status" value="1"/>
</dbReference>
<dbReference type="PANTHER" id="PTHR48082:SF2">
    <property type="entry name" value="ATP SYNTHASE SUBUNIT ALPHA, MITOCHONDRIAL"/>
    <property type="match status" value="1"/>
</dbReference>
<dbReference type="Pfam" id="PF00006">
    <property type="entry name" value="ATP-synt_ab"/>
    <property type="match status" value="1"/>
</dbReference>
<dbReference type="Pfam" id="PF00306">
    <property type="entry name" value="ATP-synt_ab_C"/>
    <property type="match status" value="1"/>
</dbReference>
<dbReference type="Pfam" id="PF02874">
    <property type="entry name" value="ATP-synt_ab_N"/>
    <property type="match status" value="1"/>
</dbReference>
<dbReference type="SUPFAM" id="SSF47917">
    <property type="entry name" value="C-terminal domain of alpha and beta subunits of F1 ATP synthase"/>
    <property type="match status" value="1"/>
</dbReference>
<dbReference type="SUPFAM" id="SSF50615">
    <property type="entry name" value="N-terminal domain of alpha and beta subunits of F1 ATP synthase"/>
    <property type="match status" value="1"/>
</dbReference>
<dbReference type="SUPFAM" id="SSF52540">
    <property type="entry name" value="P-loop containing nucleoside triphosphate hydrolases"/>
    <property type="match status" value="1"/>
</dbReference>
<dbReference type="PROSITE" id="PS00152">
    <property type="entry name" value="ATPASE_ALPHA_BETA"/>
    <property type="match status" value="1"/>
</dbReference>